<gene>
    <name evidence="1" type="primary">rpmD</name>
    <name type="ordered locus">azo3399</name>
</gene>
<protein>
    <recommendedName>
        <fullName evidence="1">Large ribosomal subunit protein uL30</fullName>
    </recommendedName>
    <alternativeName>
        <fullName evidence="2">50S ribosomal protein L30</fullName>
    </alternativeName>
</protein>
<accession>A1KB09</accession>
<organism>
    <name type="scientific">Azoarcus sp. (strain BH72)</name>
    <dbReference type="NCBI Taxonomy" id="418699"/>
    <lineage>
        <taxon>Bacteria</taxon>
        <taxon>Pseudomonadati</taxon>
        <taxon>Pseudomonadota</taxon>
        <taxon>Betaproteobacteria</taxon>
        <taxon>Rhodocyclales</taxon>
        <taxon>Zoogloeaceae</taxon>
        <taxon>Azoarcus</taxon>
    </lineage>
</organism>
<sequence length="60" mass="6600">MSDKKIKVTLVKSVIGTKQSHRATVRGLGLRRLNHTVELVDTPAVRGMVTKVAYLVKVEA</sequence>
<dbReference type="EMBL" id="AM406670">
    <property type="protein sequence ID" value="CAL96015.1"/>
    <property type="molecule type" value="Genomic_DNA"/>
</dbReference>
<dbReference type="RefSeq" id="WP_011767122.1">
    <property type="nucleotide sequence ID" value="NC_008702.1"/>
</dbReference>
<dbReference type="SMR" id="A1KB09"/>
<dbReference type="STRING" id="62928.azo3399"/>
<dbReference type="KEGG" id="aoa:dqs_3538"/>
<dbReference type="KEGG" id="azo:azo3399"/>
<dbReference type="eggNOG" id="COG1841">
    <property type="taxonomic scope" value="Bacteria"/>
</dbReference>
<dbReference type="HOGENOM" id="CLU_131047_1_4_4"/>
<dbReference type="OrthoDB" id="9812790at2"/>
<dbReference type="Proteomes" id="UP000002588">
    <property type="component" value="Chromosome"/>
</dbReference>
<dbReference type="GO" id="GO:0022625">
    <property type="term" value="C:cytosolic large ribosomal subunit"/>
    <property type="evidence" value="ECO:0007669"/>
    <property type="project" value="TreeGrafter"/>
</dbReference>
<dbReference type="GO" id="GO:0003735">
    <property type="term" value="F:structural constituent of ribosome"/>
    <property type="evidence" value="ECO:0007669"/>
    <property type="project" value="InterPro"/>
</dbReference>
<dbReference type="GO" id="GO:0006412">
    <property type="term" value="P:translation"/>
    <property type="evidence" value="ECO:0007669"/>
    <property type="project" value="UniProtKB-UniRule"/>
</dbReference>
<dbReference type="CDD" id="cd01658">
    <property type="entry name" value="Ribosomal_L30"/>
    <property type="match status" value="1"/>
</dbReference>
<dbReference type="FunFam" id="3.30.1390.20:FF:000001">
    <property type="entry name" value="50S ribosomal protein L30"/>
    <property type="match status" value="1"/>
</dbReference>
<dbReference type="Gene3D" id="3.30.1390.20">
    <property type="entry name" value="Ribosomal protein L30, ferredoxin-like fold domain"/>
    <property type="match status" value="1"/>
</dbReference>
<dbReference type="HAMAP" id="MF_01371_B">
    <property type="entry name" value="Ribosomal_uL30_B"/>
    <property type="match status" value="1"/>
</dbReference>
<dbReference type="InterPro" id="IPR036919">
    <property type="entry name" value="Ribo_uL30_ferredoxin-like_sf"/>
</dbReference>
<dbReference type="InterPro" id="IPR005996">
    <property type="entry name" value="Ribosomal_uL30_bac-type"/>
</dbReference>
<dbReference type="InterPro" id="IPR018038">
    <property type="entry name" value="Ribosomal_uL30_CS"/>
</dbReference>
<dbReference type="InterPro" id="IPR016082">
    <property type="entry name" value="Ribosomal_uL30_ferredoxin-like"/>
</dbReference>
<dbReference type="NCBIfam" id="TIGR01308">
    <property type="entry name" value="rpmD_bact"/>
    <property type="match status" value="1"/>
</dbReference>
<dbReference type="PANTHER" id="PTHR15892:SF2">
    <property type="entry name" value="LARGE RIBOSOMAL SUBUNIT PROTEIN UL30M"/>
    <property type="match status" value="1"/>
</dbReference>
<dbReference type="PANTHER" id="PTHR15892">
    <property type="entry name" value="MITOCHONDRIAL RIBOSOMAL PROTEIN L30"/>
    <property type="match status" value="1"/>
</dbReference>
<dbReference type="Pfam" id="PF00327">
    <property type="entry name" value="Ribosomal_L30"/>
    <property type="match status" value="1"/>
</dbReference>
<dbReference type="PIRSF" id="PIRSF002211">
    <property type="entry name" value="Ribosomal_L30_bac-type"/>
    <property type="match status" value="1"/>
</dbReference>
<dbReference type="SUPFAM" id="SSF55129">
    <property type="entry name" value="Ribosomal protein L30p/L7e"/>
    <property type="match status" value="1"/>
</dbReference>
<dbReference type="PROSITE" id="PS00634">
    <property type="entry name" value="RIBOSOMAL_L30"/>
    <property type="match status" value="1"/>
</dbReference>
<proteinExistence type="inferred from homology"/>
<evidence type="ECO:0000255" key="1">
    <source>
        <dbReference type="HAMAP-Rule" id="MF_01371"/>
    </source>
</evidence>
<evidence type="ECO:0000305" key="2"/>
<comment type="subunit">
    <text evidence="1">Part of the 50S ribosomal subunit.</text>
</comment>
<comment type="similarity">
    <text evidence="1">Belongs to the universal ribosomal protein uL30 family.</text>
</comment>
<reference key="1">
    <citation type="journal article" date="2006" name="Nat. Biotechnol.">
        <title>Complete genome of the mutualistic, N2-fixing grass endophyte Azoarcus sp. strain BH72.</title>
        <authorList>
            <person name="Krause A."/>
            <person name="Ramakumar A."/>
            <person name="Bartels D."/>
            <person name="Battistoni F."/>
            <person name="Bekel T."/>
            <person name="Boch J."/>
            <person name="Boehm M."/>
            <person name="Friedrich F."/>
            <person name="Hurek T."/>
            <person name="Krause L."/>
            <person name="Linke B."/>
            <person name="McHardy A.C."/>
            <person name="Sarkar A."/>
            <person name="Schneiker S."/>
            <person name="Syed A.A."/>
            <person name="Thauer R."/>
            <person name="Vorhoelter F.-J."/>
            <person name="Weidner S."/>
            <person name="Puehler A."/>
            <person name="Reinhold-Hurek B."/>
            <person name="Kaiser O."/>
            <person name="Goesmann A."/>
        </authorList>
    </citation>
    <scope>NUCLEOTIDE SEQUENCE [LARGE SCALE GENOMIC DNA]</scope>
    <source>
        <strain>BH72</strain>
    </source>
</reference>
<feature type="chain" id="PRO_1000056003" description="Large ribosomal subunit protein uL30">
    <location>
        <begin position="1"/>
        <end position="60"/>
    </location>
</feature>
<name>RL30_AZOSB</name>
<keyword id="KW-1185">Reference proteome</keyword>
<keyword id="KW-0687">Ribonucleoprotein</keyword>
<keyword id="KW-0689">Ribosomal protein</keyword>